<comment type="function">
    <text evidence="1">This is one of the proteins that bind and probably mediate the attachment of the 5S RNA into the large ribosomal subunit, where it forms part of the central protuberance.</text>
</comment>
<comment type="subunit">
    <text evidence="1">Part of the 50S ribosomal subunit; part of the 5S rRNA/L5/L18/L25 subcomplex. Contacts the 5S and 23S rRNAs.</text>
</comment>
<comment type="similarity">
    <text evidence="1">Belongs to the universal ribosomal protein uL18 family.</text>
</comment>
<sequence length="120" mass="13057">MAQDNKATDRRRARVRRTLRARAYGKPRLSVFRSSKQIYCQIIDDEAGLTLAAASSLEKSARESLKTGADVEAARAIGKLIAERATAAGVTDVVFDRGSYLYHGRVKALAEGAREGGLNF</sequence>
<proteinExistence type="inferred from homology"/>
<reference key="1">
    <citation type="journal article" date="2010" name="J. Bacteriol.">
        <title>Complete genome sequence of the aerobic facultative methanotroph Methylocella silvestris BL2.</title>
        <authorList>
            <person name="Chen Y."/>
            <person name="Crombie A."/>
            <person name="Rahman M.T."/>
            <person name="Dedysh S.N."/>
            <person name="Liesack W."/>
            <person name="Stott M.B."/>
            <person name="Alam M."/>
            <person name="Theisen A.R."/>
            <person name="Murrell J.C."/>
            <person name="Dunfield P.F."/>
        </authorList>
    </citation>
    <scope>NUCLEOTIDE SEQUENCE [LARGE SCALE GENOMIC DNA]</scope>
    <source>
        <strain>DSM 15510 / CIP 108128 / LMG 27833 / NCIMB 13906 / BL2</strain>
    </source>
</reference>
<organism>
    <name type="scientific">Methylocella silvestris (strain DSM 15510 / CIP 108128 / LMG 27833 / NCIMB 13906 / BL2)</name>
    <dbReference type="NCBI Taxonomy" id="395965"/>
    <lineage>
        <taxon>Bacteria</taxon>
        <taxon>Pseudomonadati</taxon>
        <taxon>Pseudomonadota</taxon>
        <taxon>Alphaproteobacteria</taxon>
        <taxon>Hyphomicrobiales</taxon>
        <taxon>Beijerinckiaceae</taxon>
        <taxon>Methylocella</taxon>
    </lineage>
</organism>
<name>RL18_METSB</name>
<gene>
    <name evidence="1" type="primary">rplR</name>
    <name type="ordered locus">Msil_0564</name>
</gene>
<keyword id="KW-1185">Reference proteome</keyword>
<keyword id="KW-0687">Ribonucleoprotein</keyword>
<keyword id="KW-0689">Ribosomal protein</keyword>
<keyword id="KW-0694">RNA-binding</keyword>
<keyword id="KW-0699">rRNA-binding</keyword>
<protein>
    <recommendedName>
        <fullName evidence="1">Large ribosomal subunit protein uL18</fullName>
    </recommendedName>
    <alternativeName>
        <fullName evidence="2">50S ribosomal protein L18</fullName>
    </alternativeName>
</protein>
<dbReference type="EMBL" id="CP001280">
    <property type="protein sequence ID" value="ACK49536.1"/>
    <property type="molecule type" value="Genomic_DNA"/>
</dbReference>
<dbReference type="RefSeq" id="WP_012589606.1">
    <property type="nucleotide sequence ID" value="NC_011666.1"/>
</dbReference>
<dbReference type="SMR" id="B8ELE7"/>
<dbReference type="STRING" id="395965.Msil_0564"/>
<dbReference type="KEGG" id="msl:Msil_0564"/>
<dbReference type="eggNOG" id="COG0256">
    <property type="taxonomic scope" value="Bacteria"/>
</dbReference>
<dbReference type="HOGENOM" id="CLU_098841_0_1_5"/>
<dbReference type="OrthoDB" id="9810939at2"/>
<dbReference type="Proteomes" id="UP000002257">
    <property type="component" value="Chromosome"/>
</dbReference>
<dbReference type="GO" id="GO:0022625">
    <property type="term" value="C:cytosolic large ribosomal subunit"/>
    <property type="evidence" value="ECO:0007669"/>
    <property type="project" value="TreeGrafter"/>
</dbReference>
<dbReference type="GO" id="GO:0008097">
    <property type="term" value="F:5S rRNA binding"/>
    <property type="evidence" value="ECO:0007669"/>
    <property type="project" value="TreeGrafter"/>
</dbReference>
<dbReference type="GO" id="GO:0003735">
    <property type="term" value="F:structural constituent of ribosome"/>
    <property type="evidence" value="ECO:0007669"/>
    <property type="project" value="InterPro"/>
</dbReference>
<dbReference type="GO" id="GO:0006412">
    <property type="term" value="P:translation"/>
    <property type="evidence" value="ECO:0007669"/>
    <property type="project" value="UniProtKB-UniRule"/>
</dbReference>
<dbReference type="CDD" id="cd00432">
    <property type="entry name" value="Ribosomal_L18_L5e"/>
    <property type="match status" value="1"/>
</dbReference>
<dbReference type="FunFam" id="3.30.420.100:FF:000001">
    <property type="entry name" value="50S ribosomal protein L18"/>
    <property type="match status" value="1"/>
</dbReference>
<dbReference type="Gene3D" id="3.30.420.100">
    <property type="match status" value="1"/>
</dbReference>
<dbReference type="HAMAP" id="MF_01337_B">
    <property type="entry name" value="Ribosomal_uL18_B"/>
    <property type="match status" value="1"/>
</dbReference>
<dbReference type="InterPro" id="IPR004389">
    <property type="entry name" value="Ribosomal_uL18_bac-type"/>
</dbReference>
<dbReference type="InterPro" id="IPR005484">
    <property type="entry name" value="Ribosomal_uL18_bac/euk"/>
</dbReference>
<dbReference type="NCBIfam" id="TIGR00060">
    <property type="entry name" value="L18_bact"/>
    <property type="match status" value="1"/>
</dbReference>
<dbReference type="PANTHER" id="PTHR12899">
    <property type="entry name" value="39S RIBOSOMAL PROTEIN L18, MITOCHONDRIAL"/>
    <property type="match status" value="1"/>
</dbReference>
<dbReference type="PANTHER" id="PTHR12899:SF3">
    <property type="entry name" value="LARGE RIBOSOMAL SUBUNIT PROTEIN UL18M"/>
    <property type="match status" value="1"/>
</dbReference>
<dbReference type="Pfam" id="PF00861">
    <property type="entry name" value="Ribosomal_L18p"/>
    <property type="match status" value="1"/>
</dbReference>
<dbReference type="SUPFAM" id="SSF53137">
    <property type="entry name" value="Translational machinery components"/>
    <property type="match status" value="1"/>
</dbReference>
<accession>B8ELE7</accession>
<feature type="chain" id="PRO_1000166241" description="Large ribosomal subunit protein uL18">
    <location>
        <begin position="1"/>
        <end position="120"/>
    </location>
</feature>
<evidence type="ECO:0000255" key="1">
    <source>
        <dbReference type="HAMAP-Rule" id="MF_01337"/>
    </source>
</evidence>
<evidence type="ECO:0000305" key="2"/>